<keyword id="KW-0028">Amino-acid biosynthesis</keyword>
<keyword id="KW-0170">Cobalt</keyword>
<keyword id="KW-0220">Diaminopimelate biosynthesis</keyword>
<keyword id="KW-0378">Hydrolase</keyword>
<keyword id="KW-0457">Lysine biosynthesis</keyword>
<keyword id="KW-0479">Metal-binding</keyword>
<keyword id="KW-0862">Zinc</keyword>
<proteinExistence type="inferred from homology"/>
<gene>
    <name evidence="1" type="primary">dapE</name>
    <name type="ordered locus">EcolC_1205</name>
</gene>
<sequence>MSCPVIELTQQLIRRPSLSPDDAGCQALLIERLQAIGFTVERMDFADTQNFWAWRGQGETLAFAGHTDVVPPGDADRWINPPFEPTIRDGMLFGRGAADMKGSLAAMVVAAERFVAQHPNHTGRLAFLITSDEEASAHNGTVKVVEALMARNERLDYCLVGEPSSIEVVGDVVKNGRRGSLTCNLTIHGVQGHVAYPHLADNPVHRAAPFLNELVAIEWDQGNEFFPATSMQIANIQAGTGSNNVIPGELFVQFNFRFSTELTDEMIKAQVLALLEKHQLRYTVDWWLSGQPFLTARGKLVDAVVNAVEHYNEIKPQLLTTGGTSDGRFIARMGAQVVELGPVNATIHKINECVNAADLQLLARMYQRIMEQLVA</sequence>
<comment type="function">
    <text evidence="1">Catalyzes the hydrolysis of N-succinyl-L,L-diaminopimelic acid (SDAP), forming succinate and LL-2,6-diaminopimelate (DAP), an intermediate involved in the bacterial biosynthesis of lysine and meso-diaminopimelic acid, an essential component of bacterial cell walls.</text>
</comment>
<comment type="catalytic activity">
    <reaction evidence="1">
        <text>N-succinyl-(2S,6S)-2,6-diaminopimelate + H2O = (2S,6S)-2,6-diaminopimelate + succinate</text>
        <dbReference type="Rhea" id="RHEA:22608"/>
        <dbReference type="ChEBI" id="CHEBI:15377"/>
        <dbReference type="ChEBI" id="CHEBI:30031"/>
        <dbReference type="ChEBI" id="CHEBI:57609"/>
        <dbReference type="ChEBI" id="CHEBI:58087"/>
        <dbReference type="EC" id="3.5.1.18"/>
    </reaction>
</comment>
<comment type="cofactor">
    <cofactor evidence="1">
        <name>Zn(2+)</name>
        <dbReference type="ChEBI" id="CHEBI:29105"/>
    </cofactor>
    <cofactor evidence="1">
        <name>Co(2+)</name>
        <dbReference type="ChEBI" id="CHEBI:48828"/>
    </cofactor>
    <text evidence="1">Binds 2 Zn(2+) or Co(2+) ions per subunit.</text>
</comment>
<comment type="pathway">
    <text evidence="1">Amino-acid biosynthesis; L-lysine biosynthesis via DAP pathway; LL-2,6-diaminopimelate from (S)-tetrahydrodipicolinate (succinylase route): step 3/3.</text>
</comment>
<comment type="subunit">
    <text evidence="1">Homodimer.</text>
</comment>
<comment type="similarity">
    <text evidence="1">Belongs to the peptidase M20A family. DapE subfamily.</text>
</comment>
<name>DAPE_ECOLC</name>
<evidence type="ECO:0000255" key="1">
    <source>
        <dbReference type="HAMAP-Rule" id="MF_01690"/>
    </source>
</evidence>
<feature type="chain" id="PRO_0000375554" description="Succinyl-diaminopimelate desuccinylase">
    <location>
        <begin position="1"/>
        <end position="375"/>
    </location>
</feature>
<feature type="active site" evidence="1">
    <location>
        <position position="68"/>
    </location>
</feature>
<feature type="active site" description="Proton acceptor" evidence="1">
    <location>
        <position position="133"/>
    </location>
</feature>
<feature type="binding site" evidence="1">
    <location>
        <position position="66"/>
    </location>
    <ligand>
        <name>Zn(2+)</name>
        <dbReference type="ChEBI" id="CHEBI:29105"/>
        <label>1</label>
    </ligand>
</feature>
<feature type="binding site" evidence="1">
    <location>
        <position position="99"/>
    </location>
    <ligand>
        <name>Zn(2+)</name>
        <dbReference type="ChEBI" id="CHEBI:29105"/>
        <label>1</label>
    </ligand>
</feature>
<feature type="binding site" evidence="1">
    <location>
        <position position="99"/>
    </location>
    <ligand>
        <name>Zn(2+)</name>
        <dbReference type="ChEBI" id="CHEBI:29105"/>
        <label>2</label>
    </ligand>
</feature>
<feature type="binding site" evidence="1">
    <location>
        <position position="134"/>
    </location>
    <ligand>
        <name>Zn(2+)</name>
        <dbReference type="ChEBI" id="CHEBI:29105"/>
        <label>2</label>
    </ligand>
</feature>
<feature type="binding site" evidence="1">
    <location>
        <position position="162"/>
    </location>
    <ligand>
        <name>Zn(2+)</name>
        <dbReference type="ChEBI" id="CHEBI:29105"/>
        <label>1</label>
    </ligand>
</feature>
<feature type="binding site" evidence="1">
    <location>
        <position position="348"/>
    </location>
    <ligand>
        <name>Zn(2+)</name>
        <dbReference type="ChEBI" id="CHEBI:29105"/>
        <label>2</label>
    </ligand>
</feature>
<reference key="1">
    <citation type="submission" date="2008-02" db="EMBL/GenBank/DDBJ databases">
        <title>Complete sequence of Escherichia coli C str. ATCC 8739.</title>
        <authorList>
            <person name="Copeland A."/>
            <person name="Lucas S."/>
            <person name="Lapidus A."/>
            <person name="Glavina del Rio T."/>
            <person name="Dalin E."/>
            <person name="Tice H."/>
            <person name="Bruce D."/>
            <person name="Goodwin L."/>
            <person name="Pitluck S."/>
            <person name="Kiss H."/>
            <person name="Brettin T."/>
            <person name="Detter J.C."/>
            <person name="Han C."/>
            <person name="Kuske C.R."/>
            <person name="Schmutz J."/>
            <person name="Larimer F."/>
            <person name="Land M."/>
            <person name="Hauser L."/>
            <person name="Kyrpides N."/>
            <person name="Mikhailova N."/>
            <person name="Ingram L."/>
            <person name="Richardson P."/>
        </authorList>
    </citation>
    <scope>NUCLEOTIDE SEQUENCE [LARGE SCALE GENOMIC DNA]</scope>
    <source>
        <strain>ATCC 8739 / DSM 1576 / NBRC 3972 / NCIMB 8545 / WDCM 00012 / Crooks</strain>
    </source>
</reference>
<accession>B1IWI8</accession>
<organism>
    <name type="scientific">Escherichia coli (strain ATCC 8739 / DSM 1576 / NBRC 3972 / NCIMB 8545 / WDCM 00012 / Crooks)</name>
    <dbReference type="NCBI Taxonomy" id="481805"/>
    <lineage>
        <taxon>Bacteria</taxon>
        <taxon>Pseudomonadati</taxon>
        <taxon>Pseudomonadota</taxon>
        <taxon>Gammaproteobacteria</taxon>
        <taxon>Enterobacterales</taxon>
        <taxon>Enterobacteriaceae</taxon>
        <taxon>Escherichia</taxon>
    </lineage>
</organism>
<dbReference type="EC" id="3.5.1.18" evidence="1"/>
<dbReference type="EMBL" id="CP000946">
    <property type="protein sequence ID" value="ACA76871.1"/>
    <property type="molecule type" value="Genomic_DNA"/>
</dbReference>
<dbReference type="RefSeq" id="WP_001277801.1">
    <property type="nucleotide sequence ID" value="NZ_MTFT01000002.1"/>
</dbReference>
<dbReference type="SMR" id="B1IWI8"/>
<dbReference type="MEROPS" id="M20.010"/>
<dbReference type="KEGG" id="ecl:EcolC_1205"/>
<dbReference type="HOGENOM" id="CLU_021802_4_0_6"/>
<dbReference type="UniPathway" id="UPA00034">
    <property type="reaction ID" value="UER00021"/>
</dbReference>
<dbReference type="GO" id="GO:0008777">
    <property type="term" value="F:acetylornithine deacetylase activity"/>
    <property type="evidence" value="ECO:0007669"/>
    <property type="project" value="TreeGrafter"/>
</dbReference>
<dbReference type="GO" id="GO:0050897">
    <property type="term" value="F:cobalt ion binding"/>
    <property type="evidence" value="ECO:0007669"/>
    <property type="project" value="UniProtKB-UniRule"/>
</dbReference>
<dbReference type="GO" id="GO:0009014">
    <property type="term" value="F:succinyl-diaminopimelate desuccinylase activity"/>
    <property type="evidence" value="ECO:0007669"/>
    <property type="project" value="UniProtKB-UniRule"/>
</dbReference>
<dbReference type="GO" id="GO:0008270">
    <property type="term" value="F:zinc ion binding"/>
    <property type="evidence" value="ECO:0007669"/>
    <property type="project" value="UniProtKB-UniRule"/>
</dbReference>
<dbReference type="GO" id="GO:0019877">
    <property type="term" value="P:diaminopimelate biosynthetic process"/>
    <property type="evidence" value="ECO:0007669"/>
    <property type="project" value="UniProtKB-UniRule"/>
</dbReference>
<dbReference type="GO" id="GO:0006526">
    <property type="term" value="P:L-arginine biosynthetic process"/>
    <property type="evidence" value="ECO:0007669"/>
    <property type="project" value="TreeGrafter"/>
</dbReference>
<dbReference type="GO" id="GO:0009089">
    <property type="term" value="P:lysine biosynthetic process via diaminopimelate"/>
    <property type="evidence" value="ECO:0007669"/>
    <property type="project" value="UniProtKB-UniRule"/>
</dbReference>
<dbReference type="CDD" id="cd03891">
    <property type="entry name" value="M20_DapE_proteobac"/>
    <property type="match status" value="1"/>
</dbReference>
<dbReference type="FunFam" id="3.30.70.360:FF:000011">
    <property type="entry name" value="Succinyl-diaminopimelate desuccinylase"/>
    <property type="match status" value="1"/>
</dbReference>
<dbReference type="FunFam" id="3.40.630.10:FF:000005">
    <property type="entry name" value="Succinyl-diaminopimelate desuccinylase"/>
    <property type="match status" value="1"/>
</dbReference>
<dbReference type="FunFam" id="3.40.630.10:FF:000010">
    <property type="entry name" value="Succinyl-diaminopimelate desuccinylase"/>
    <property type="match status" value="1"/>
</dbReference>
<dbReference type="Gene3D" id="3.40.630.10">
    <property type="entry name" value="Zn peptidases"/>
    <property type="match status" value="2"/>
</dbReference>
<dbReference type="HAMAP" id="MF_01690">
    <property type="entry name" value="DapE"/>
    <property type="match status" value="1"/>
</dbReference>
<dbReference type="InterPro" id="IPR001261">
    <property type="entry name" value="ArgE/DapE_CS"/>
</dbReference>
<dbReference type="InterPro" id="IPR036264">
    <property type="entry name" value="Bact_exopeptidase_dim_dom"/>
</dbReference>
<dbReference type="InterPro" id="IPR005941">
    <property type="entry name" value="DapE_proteobac"/>
</dbReference>
<dbReference type="InterPro" id="IPR002933">
    <property type="entry name" value="Peptidase_M20"/>
</dbReference>
<dbReference type="InterPro" id="IPR011650">
    <property type="entry name" value="Peptidase_M20_dimer"/>
</dbReference>
<dbReference type="InterPro" id="IPR050072">
    <property type="entry name" value="Peptidase_M20A"/>
</dbReference>
<dbReference type="NCBIfam" id="TIGR01246">
    <property type="entry name" value="dapE_proteo"/>
    <property type="match status" value="1"/>
</dbReference>
<dbReference type="NCBIfam" id="NF009557">
    <property type="entry name" value="PRK13009.1"/>
    <property type="match status" value="1"/>
</dbReference>
<dbReference type="PANTHER" id="PTHR43808">
    <property type="entry name" value="ACETYLORNITHINE DEACETYLASE"/>
    <property type="match status" value="1"/>
</dbReference>
<dbReference type="PANTHER" id="PTHR43808:SF31">
    <property type="entry name" value="N-ACETYL-L-CITRULLINE DEACETYLASE"/>
    <property type="match status" value="1"/>
</dbReference>
<dbReference type="Pfam" id="PF07687">
    <property type="entry name" value="M20_dimer"/>
    <property type="match status" value="1"/>
</dbReference>
<dbReference type="Pfam" id="PF01546">
    <property type="entry name" value="Peptidase_M20"/>
    <property type="match status" value="1"/>
</dbReference>
<dbReference type="SUPFAM" id="SSF55031">
    <property type="entry name" value="Bacterial exopeptidase dimerisation domain"/>
    <property type="match status" value="1"/>
</dbReference>
<dbReference type="SUPFAM" id="SSF53187">
    <property type="entry name" value="Zn-dependent exopeptidases"/>
    <property type="match status" value="1"/>
</dbReference>
<dbReference type="PROSITE" id="PS00758">
    <property type="entry name" value="ARGE_DAPE_CPG2_1"/>
    <property type="match status" value="1"/>
</dbReference>
<dbReference type="PROSITE" id="PS00759">
    <property type="entry name" value="ARGE_DAPE_CPG2_2"/>
    <property type="match status" value="1"/>
</dbReference>
<protein>
    <recommendedName>
        <fullName evidence="1">Succinyl-diaminopimelate desuccinylase</fullName>
        <shortName evidence="1">SDAP desuccinylase</shortName>
        <ecNumber evidence="1">3.5.1.18</ecNumber>
    </recommendedName>
    <alternativeName>
        <fullName evidence="1">N-succinyl-LL-2,6-diaminoheptanedioate amidohydrolase</fullName>
    </alternativeName>
</protein>